<comment type="function">
    <text evidence="4">Plays a role in regulating calcium and manganese homeostasis responsible for cell cycle progression.</text>
</comment>
<comment type="catalytic activity">
    <reaction>
        <text>ATP + H2O = ADP + phosphate + H(+)</text>
        <dbReference type="Rhea" id="RHEA:13065"/>
        <dbReference type="ChEBI" id="CHEBI:15377"/>
        <dbReference type="ChEBI" id="CHEBI:15378"/>
        <dbReference type="ChEBI" id="CHEBI:30616"/>
        <dbReference type="ChEBI" id="CHEBI:43474"/>
        <dbReference type="ChEBI" id="CHEBI:456216"/>
    </reaction>
</comment>
<comment type="subcellular location">
    <subcellularLocation>
        <location evidence="3">Endoplasmic reticulum membrane</location>
        <topology evidence="2">Multi-pass membrane protein</topology>
    </subcellularLocation>
    <subcellularLocation>
        <location evidence="4">Golgi apparatus membrane</location>
        <topology evidence="2">Multi-pass membrane protein</topology>
    </subcellularLocation>
</comment>
<comment type="similarity">
    <text evidence="5">Belongs to the cation transport ATPase (P-type) (TC 3.A.3) family. Type V subfamily.</text>
</comment>
<feature type="chain" id="PRO_0000046353" description="Cation-transporting ATPase 5">
    <location>
        <begin position="1"/>
        <end position="1096"/>
    </location>
</feature>
<feature type="topological domain" description="Cytoplasmic" evidence="2">
    <location>
        <begin position="1"/>
        <end position="19"/>
    </location>
</feature>
<feature type="transmembrane region" description="Helical" evidence="2">
    <location>
        <begin position="20"/>
        <end position="41"/>
    </location>
</feature>
<feature type="topological domain" description="Lumenal" evidence="2">
    <location>
        <begin position="42"/>
        <end position="47"/>
    </location>
</feature>
<feature type="transmembrane region" description="Helical" evidence="2">
    <location>
        <begin position="48"/>
        <end position="70"/>
    </location>
</feature>
<feature type="topological domain" description="Cytoplasmic" evidence="2">
    <location>
        <begin position="71"/>
        <end position="193"/>
    </location>
</feature>
<feature type="transmembrane region" description="Helical" evidence="2">
    <location>
        <begin position="194"/>
        <end position="216"/>
    </location>
</feature>
<feature type="topological domain" description="Lumenal" evidence="2">
    <location>
        <begin position="217"/>
        <end position="220"/>
    </location>
</feature>
<feature type="transmembrane region" description="Helical" evidence="2">
    <location>
        <begin position="221"/>
        <end position="238"/>
    </location>
</feature>
<feature type="topological domain" description="Cytoplasmic" evidence="2">
    <location>
        <begin position="239"/>
        <end position="391"/>
    </location>
</feature>
<feature type="transmembrane region" description="Helical" evidence="2">
    <location>
        <begin position="392"/>
        <end position="412"/>
    </location>
</feature>
<feature type="topological domain" description="Lumenal" evidence="2">
    <location>
        <begin position="413"/>
        <end position="425"/>
    </location>
</feature>
<feature type="transmembrane region" description="Helical" evidence="2">
    <location>
        <begin position="426"/>
        <end position="447"/>
    </location>
</feature>
<feature type="topological domain" description="Cytoplasmic" evidence="2">
    <location>
        <begin position="448"/>
        <end position="895"/>
    </location>
</feature>
<feature type="transmembrane region" description="Helical" evidence="2">
    <location>
        <begin position="896"/>
        <end position="915"/>
    </location>
</feature>
<feature type="topological domain" description="Lumenal" evidence="2">
    <location>
        <begin position="916"/>
        <end position="922"/>
    </location>
</feature>
<feature type="transmembrane region" description="Helical" evidence="2">
    <location>
        <begin position="923"/>
        <end position="940"/>
    </location>
</feature>
<feature type="topological domain" description="Cytoplasmic" evidence="2">
    <location>
        <begin position="941"/>
        <end position="958"/>
    </location>
</feature>
<feature type="transmembrane region" description="Helical" evidence="2">
    <location>
        <begin position="959"/>
        <end position="982"/>
    </location>
</feature>
<feature type="topological domain" description="Lumenal" evidence="2">
    <location>
        <begin position="983"/>
        <end position="1003"/>
    </location>
</feature>
<feature type="transmembrane region" description="Helical" evidence="2">
    <location>
        <begin position="1004"/>
        <end position="1026"/>
    </location>
</feature>
<feature type="topological domain" description="Cytoplasmic" evidence="2">
    <location>
        <begin position="1027"/>
        <end position="1040"/>
    </location>
</feature>
<feature type="transmembrane region" description="Helical" evidence="2">
    <location>
        <begin position="1041"/>
        <end position="1060"/>
    </location>
</feature>
<feature type="topological domain" description="Lumenal" evidence="2">
    <location>
        <begin position="1061"/>
        <end position="1075"/>
    </location>
</feature>
<feature type="transmembrane region" description="Helical" evidence="2">
    <location>
        <begin position="1076"/>
        <end position="1096"/>
    </location>
</feature>
<feature type="active site" description="4-aspartylphosphate intermediate" evidence="1">
    <location>
        <position position="480"/>
    </location>
</feature>
<feature type="binding site" evidence="1">
    <location>
        <position position="838"/>
    </location>
    <ligand>
        <name>Mg(2+)</name>
        <dbReference type="ChEBI" id="CHEBI:18420"/>
    </ligand>
</feature>
<feature type="binding site" evidence="1">
    <location>
        <position position="842"/>
    </location>
    <ligand>
        <name>Mg(2+)</name>
        <dbReference type="ChEBI" id="CHEBI:18420"/>
    </ligand>
</feature>
<organism>
    <name type="scientific">Schizosaccharomyces pombe (strain 972 / ATCC 24843)</name>
    <name type="common">Fission yeast</name>
    <dbReference type="NCBI Taxonomy" id="284812"/>
    <lineage>
        <taxon>Eukaryota</taxon>
        <taxon>Fungi</taxon>
        <taxon>Dikarya</taxon>
        <taxon>Ascomycota</taxon>
        <taxon>Taphrinomycotina</taxon>
        <taxon>Schizosaccharomycetes</taxon>
        <taxon>Schizosaccharomycetales</taxon>
        <taxon>Schizosaccharomycetaceae</taxon>
        <taxon>Schizosaccharomyces</taxon>
    </lineage>
</organism>
<evidence type="ECO:0000250" key="1"/>
<evidence type="ECO:0000255" key="2"/>
<evidence type="ECO:0000269" key="3">
    <source>
    </source>
</evidence>
<evidence type="ECO:0000269" key="4">
    <source>
    </source>
</evidence>
<evidence type="ECO:0000305" key="5"/>
<keyword id="KW-0067">ATP-binding</keyword>
<keyword id="KW-0106">Calcium</keyword>
<keyword id="KW-0256">Endoplasmic reticulum</keyword>
<keyword id="KW-0333">Golgi apparatus</keyword>
<keyword id="KW-0460">Magnesium</keyword>
<keyword id="KW-0464">Manganese</keyword>
<keyword id="KW-0472">Membrane</keyword>
<keyword id="KW-0479">Metal-binding</keyword>
<keyword id="KW-0547">Nucleotide-binding</keyword>
<keyword id="KW-0597">Phosphoprotein</keyword>
<keyword id="KW-1185">Reference proteome</keyword>
<keyword id="KW-1278">Translocase</keyword>
<keyword id="KW-0812">Transmembrane</keyword>
<keyword id="KW-1133">Transmembrane helix</keyword>
<proteinExistence type="inferred from homology"/>
<dbReference type="EC" id="7.2.2.-"/>
<dbReference type="EMBL" id="CU329670">
    <property type="protein sequence ID" value="CAB10145.1"/>
    <property type="molecule type" value="Genomic_DNA"/>
</dbReference>
<dbReference type="PIR" id="T38470">
    <property type="entry name" value="T38470"/>
</dbReference>
<dbReference type="RefSeq" id="NP_594863.1">
    <property type="nucleotide sequence ID" value="NM_001020292.2"/>
</dbReference>
<dbReference type="SMR" id="O14022"/>
<dbReference type="BioGRID" id="278553">
    <property type="interactions" value="8"/>
</dbReference>
<dbReference type="FunCoup" id="O14022">
    <property type="interactions" value="35"/>
</dbReference>
<dbReference type="STRING" id="284812.O14022"/>
<dbReference type="TCDB" id="3.A.3.10.13">
    <property type="family name" value="the p-type atpase (p-atpase) superfamily"/>
</dbReference>
<dbReference type="iPTMnet" id="O14022"/>
<dbReference type="PaxDb" id="4896-SPAC29A4.19c.1"/>
<dbReference type="EnsemblFungi" id="SPAC29A4.19c.1">
    <property type="protein sequence ID" value="SPAC29A4.19c.1:pep"/>
    <property type="gene ID" value="SPAC29A4.19c"/>
</dbReference>
<dbReference type="GeneID" id="2542076"/>
<dbReference type="KEGG" id="spo:2542076"/>
<dbReference type="PomBase" id="SPAC29A4.19c">
    <property type="gene designation" value="cta5"/>
</dbReference>
<dbReference type="VEuPathDB" id="FungiDB:SPAC29A4.19c"/>
<dbReference type="eggNOG" id="KOG0208">
    <property type="taxonomic scope" value="Eukaryota"/>
</dbReference>
<dbReference type="HOGENOM" id="CLU_001828_0_0_1"/>
<dbReference type="InParanoid" id="O14022"/>
<dbReference type="OMA" id="CAFESKI"/>
<dbReference type="PhylomeDB" id="O14022"/>
<dbReference type="Reactome" id="R-SPO-936837">
    <property type="pathway name" value="Ion transport by P-type ATPases"/>
</dbReference>
<dbReference type="PRO" id="PR:O14022"/>
<dbReference type="Proteomes" id="UP000002485">
    <property type="component" value="Chromosome I"/>
</dbReference>
<dbReference type="GO" id="GO:0005783">
    <property type="term" value="C:endoplasmic reticulum"/>
    <property type="evidence" value="ECO:0007005"/>
    <property type="project" value="PomBase"/>
</dbReference>
<dbReference type="GO" id="GO:0005789">
    <property type="term" value="C:endoplasmic reticulum membrane"/>
    <property type="evidence" value="ECO:0007669"/>
    <property type="project" value="UniProtKB-SubCell"/>
</dbReference>
<dbReference type="GO" id="GO:0005794">
    <property type="term" value="C:Golgi apparatus"/>
    <property type="evidence" value="ECO:0000314"/>
    <property type="project" value="PomBase"/>
</dbReference>
<dbReference type="GO" id="GO:0000139">
    <property type="term" value="C:Golgi membrane"/>
    <property type="evidence" value="ECO:0007669"/>
    <property type="project" value="UniProtKB-SubCell"/>
</dbReference>
<dbReference type="GO" id="GO:0016020">
    <property type="term" value="C:membrane"/>
    <property type="evidence" value="ECO:0000318"/>
    <property type="project" value="GO_Central"/>
</dbReference>
<dbReference type="GO" id="GO:0005524">
    <property type="term" value="F:ATP binding"/>
    <property type="evidence" value="ECO:0007669"/>
    <property type="project" value="UniProtKB-KW"/>
</dbReference>
<dbReference type="GO" id="GO:0016887">
    <property type="term" value="F:ATP hydrolysis activity"/>
    <property type="evidence" value="ECO:0007669"/>
    <property type="project" value="InterPro"/>
</dbReference>
<dbReference type="GO" id="GO:0019829">
    <property type="term" value="F:ATPase-coupled monoatomic cation transmembrane transporter activity"/>
    <property type="evidence" value="ECO:0000315"/>
    <property type="project" value="PomBase"/>
</dbReference>
<dbReference type="GO" id="GO:0046872">
    <property type="term" value="F:metal ion binding"/>
    <property type="evidence" value="ECO:0007669"/>
    <property type="project" value="UniProtKB-KW"/>
</dbReference>
<dbReference type="GO" id="GO:0140358">
    <property type="term" value="F:P-type transmembrane transporter activity"/>
    <property type="evidence" value="ECO:0007669"/>
    <property type="project" value="InterPro"/>
</dbReference>
<dbReference type="GO" id="GO:0070588">
    <property type="term" value="P:calcium ion transmembrane transport"/>
    <property type="evidence" value="ECO:0000315"/>
    <property type="project" value="PomBase"/>
</dbReference>
<dbReference type="GO" id="GO:0006874">
    <property type="term" value="P:intracellular calcium ion homeostasis"/>
    <property type="evidence" value="ECO:0000318"/>
    <property type="project" value="GO_Central"/>
</dbReference>
<dbReference type="GO" id="GO:0055085">
    <property type="term" value="P:transmembrane transport"/>
    <property type="evidence" value="ECO:0000318"/>
    <property type="project" value="GO_Central"/>
</dbReference>
<dbReference type="Gene3D" id="3.40.1110.10">
    <property type="entry name" value="Calcium-transporting ATPase, cytoplasmic domain N"/>
    <property type="match status" value="1"/>
</dbReference>
<dbReference type="Gene3D" id="2.70.150.10">
    <property type="entry name" value="Calcium-transporting ATPase, cytoplasmic transduction domain A"/>
    <property type="match status" value="1"/>
</dbReference>
<dbReference type="Gene3D" id="1.20.1110.10">
    <property type="entry name" value="Calcium-transporting ATPase, transmembrane domain"/>
    <property type="match status" value="1"/>
</dbReference>
<dbReference type="Gene3D" id="3.40.50.1000">
    <property type="entry name" value="HAD superfamily/HAD-like"/>
    <property type="match status" value="1"/>
</dbReference>
<dbReference type="InterPro" id="IPR004014">
    <property type="entry name" value="ATPase_P-typ_cation-transptr_N"/>
</dbReference>
<dbReference type="InterPro" id="IPR023299">
    <property type="entry name" value="ATPase_P-typ_cyto_dom_N"/>
</dbReference>
<dbReference type="InterPro" id="IPR018303">
    <property type="entry name" value="ATPase_P-typ_P_site"/>
</dbReference>
<dbReference type="InterPro" id="IPR023298">
    <property type="entry name" value="ATPase_P-typ_TM_dom_sf"/>
</dbReference>
<dbReference type="InterPro" id="IPR008250">
    <property type="entry name" value="ATPase_P-typ_transduc_dom_A_sf"/>
</dbReference>
<dbReference type="InterPro" id="IPR036412">
    <property type="entry name" value="HAD-like_sf"/>
</dbReference>
<dbReference type="InterPro" id="IPR023214">
    <property type="entry name" value="HAD_sf"/>
</dbReference>
<dbReference type="InterPro" id="IPR006544">
    <property type="entry name" value="P-type_TPase_V"/>
</dbReference>
<dbReference type="InterPro" id="IPR047819">
    <property type="entry name" value="P5A-ATPase_N"/>
</dbReference>
<dbReference type="InterPro" id="IPR001757">
    <property type="entry name" value="P_typ_ATPase"/>
</dbReference>
<dbReference type="InterPro" id="IPR044492">
    <property type="entry name" value="P_typ_ATPase_HD_dom"/>
</dbReference>
<dbReference type="NCBIfam" id="TIGR01494">
    <property type="entry name" value="ATPase_P-type"/>
    <property type="match status" value="2"/>
</dbReference>
<dbReference type="NCBIfam" id="TIGR01657">
    <property type="entry name" value="P-ATPase-V"/>
    <property type="match status" value="1"/>
</dbReference>
<dbReference type="PANTHER" id="PTHR45630:SF15">
    <property type="entry name" value="CATION-TRANSPORTING ATPASE 5"/>
    <property type="match status" value="1"/>
</dbReference>
<dbReference type="PANTHER" id="PTHR45630">
    <property type="entry name" value="CATION-TRANSPORTING ATPASE-RELATED"/>
    <property type="match status" value="1"/>
</dbReference>
<dbReference type="Pfam" id="PF13246">
    <property type="entry name" value="Cation_ATPase"/>
    <property type="match status" value="1"/>
</dbReference>
<dbReference type="Pfam" id="PF00690">
    <property type="entry name" value="Cation_ATPase_N"/>
    <property type="match status" value="1"/>
</dbReference>
<dbReference type="Pfam" id="PF00122">
    <property type="entry name" value="E1-E2_ATPase"/>
    <property type="match status" value="1"/>
</dbReference>
<dbReference type="Pfam" id="PF12409">
    <property type="entry name" value="P5-ATPase"/>
    <property type="match status" value="1"/>
</dbReference>
<dbReference type="PRINTS" id="PR00119">
    <property type="entry name" value="CATATPASE"/>
</dbReference>
<dbReference type="SFLD" id="SFLDS00003">
    <property type="entry name" value="Haloacid_Dehalogenase"/>
    <property type="match status" value="1"/>
</dbReference>
<dbReference type="SFLD" id="SFLDF00027">
    <property type="entry name" value="p-type_atpase"/>
    <property type="match status" value="1"/>
</dbReference>
<dbReference type="SUPFAM" id="SSF81653">
    <property type="entry name" value="Calcium ATPase, transduction domain A"/>
    <property type="match status" value="1"/>
</dbReference>
<dbReference type="SUPFAM" id="SSF81665">
    <property type="entry name" value="Calcium ATPase, transmembrane domain M"/>
    <property type="match status" value="1"/>
</dbReference>
<dbReference type="SUPFAM" id="SSF56784">
    <property type="entry name" value="HAD-like"/>
    <property type="match status" value="1"/>
</dbReference>
<dbReference type="SUPFAM" id="SSF81660">
    <property type="entry name" value="Metal cation-transporting ATPase, ATP-binding domain N"/>
    <property type="match status" value="1"/>
</dbReference>
<dbReference type="PROSITE" id="PS00154">
    <property type="entry name" value="ATPASE_E1_E2"/>
    <property type="match status" value="1"/>
</dbReference>
<reference key="1">
    <citation type="journal article" date="2002" name="Nature">
        <title>The genome sequence of Schizosaccharomyces pombe.</title>
        <authorList>
            <person name="Wood V."/>
            <person name="Gwilliam R."/>
            <person name="Rajandream M.A."/>
            <person name="Lyne M.H."/>
            <person name="Lyne R."/>
            <person name="Stewart A."/>
            <person name="Sgouros J.G."/>
            <person name="Peat N."/>
            <person name="Hayles J."/>
            <person name="Baker S.G."/>
            <person name="Basham D."/>
            <person name="Bowman S."/>
            <person name="Brooks K."/>
            <person name="Brown D."/>
            <person name="Brown S."/>
            <person name="Chillingworth T."/>
            <person name="Churcher C.M."/>
            <person name="Collins M."/>
            <person name="Connor R."/>
            <person name="Cronin A."/>
            <person name="Davis P."/>
            <person name="Feltwell T."/>
            <person name="Fraser A."/>
            <person name="Gentles S."/>
            <person name="Goble A."/>
            <person name="Hamlin N."/>
            <person name="Harris D.E."/>
            <person name="Hidalgo J."/>
            <person name="Hodgson G."/>
            <person name="Holroyd S."/>
            <person name="Hornsby T."/>
            <person name="Howarth S."/>
            <person name="Huckle E.J."/>
            <person name="Hunt S."/>
            <person name="Jagels K."/>
            <person name="James K.D."/>
            <person name="Jones L."/>
            <person name="Jones M."/>
            <person name="Leather S."/>
            <person name="McDonald S."/>
            <person name="McLean J."/>
            <person name="Mooney P."/>
            <person name="Moule S."/>
            <person name="Mungall K.L."/>
            <person name="Murphy L.D."/>
            <person name="Niblett D."/>
            <person name="Odell C."/>
            <person name="Oliver K."/>
            <person name="O'Neil S."/>
            <person name="Pearson D."/>
            <person name="Quail M.A."/>
            <person name="Rabbinowitsch E."/>
            <person name="Rutherford K.M."/>
            <person name="Rutter S."/>
            <person name="Saunders D."/>
            <person name="Seeger K."/>
            <person name="Sharp S."/>
            <person name="Skelton J."/>
            <person name="Simmonds M.N."/>
            <person name="Squares R."/>
            <person name="Squares S."/>
            <person name="Stevens K."/>
            <person name="Taylor K."/>
            <person name="Taylor R.G."/>
            <person name="Tivey A."/>
            <person name="Walsh S.V."/>
            <person name="Warren T."/>
            <person name="Whitehead S."/>
            <person name="Woodward J.R."/>
            <person name="Volckaert G."/>
            <person name="Aert R."/>
            <person name="Robben J."/>
            <person name="Grymonprez B."/>
            <person name="Weltjens I."/>
            <person name="Vanstreels E."/>
            <person name="Rieger M."/>
            <person name="Schaefer M."/>
            <person name="Mueller-Auer S."/>
            <person name="Gabel C."/>
            <person name="Fuchs M."/>
            <person name="Duesterhoeft A."/>
            <person name="Fritzc C."/>
            <person name="Holzer E."/>
            <person name="Moestl D."/>
            <person name="Hilbert H."/>
            <person name="Borzym K."/>
            <person name="Langer I."/>
            <person name="Beck A."/>
            <person name="Lehrach H."/>
            <person name="Reinhardt R."/>
            <person name="Pohl T.M."/>
            <person name="Eger P."/>
            <person name="Zimmermann W."/>
            <person name="Wedler H."/>
            <person name="Wambutt R."/>
            <person name="Purnelle B."/>
            <person name="Goffeau A."/>
            <person name="Cadieu E."/>
            <person name="Dreano S."/>
            <person name="Gloux S."/>
            <person name="Lelaure V."/>
            <person name="Mottier S."/>
            <person name="Galibert F."/>
            <person name="Aves S.J."/>
            <person name="Xiang Z."/>
            <person name="Hunt C."/>
            <person name="Moore K."/>
            <person name="Hurst S.M."/>
            <person name="Lucas M."/>
            <person name="Rochet M."/>
            <person name="Gaillardin C."/>
            <person name="Tallada V.A."/>
            <person name="Garzon A."/>
            <person name="Thode G."/>
            <person name="Daga R.R."/>
            <person name="Cruzado L."/>
            <person name="Jimenez J."/>
            <person name="Sanchez M."/>
            <person name="del Rey F."/>
            <person name="Benito J."/>
            <person name="Dominguez A."/>
            <person name="Revuelta J.L."/>
            <person name="Moreno S."/>
            <person name="Armstrong J."/>
            <person name="Forsburg S.L."/>
            <person name="Cerutti L."/>
            <person name="Lowe T."/>
            <person name="McCombie W.R."/>
            <person name="Paulsen I."/>
            <person name="Potashkin J."/>
            <person name="Shpakovski G.V."/>
            <person name="Ussery D."/>
            <person name="Barrell B.G."/>
            <person name="Nurse P."/>
        </authorList>
    </citation>
    <scope>NUCLEOTIDE SEQUENCE [LARGE SCALE GENOMIC DNA]</scope>
    <source>
        <strain>972 / ATCC 24843</strain>
    </source>
</reference>
<reference key="2">
    <citation type="journal article" date="2006" name="Nat. Biotechnol.">
        <title>ORFeome cloning and global analysis of protein localization in the fission yeast Schizosaccharomyces pombe.</title>
        <authorList>
            <person name="Matsuyama A."/>
            <person name="Arai R."/>
            <person name="Yashiroda Y."/>
            <person name="Shirai A."/>
            <person name="Kamata A."/>
            <person name="Sekido S."/>
            <person name="Kobayashi Y."/>
            <person name="Hashimoto A."/>
            <person name="Hamamoto M."/>
            <person name="Hiraoka Y."/>
            <person name="Horinouchi S."/>
            <person name="Yoshida M."/>
        </authorList>
    </citation>
    <scope>SUBCELLULAR LOCATION [LARGE SCALE ANALYSIS]</scope>
</reference>
<reference key="3">
    <citation type="journal article" date="2008" name="Genes Genet. Syst.">
        <title>Characterization of a fission yeast P(5)-type ATPase homologue that is essential for Ca(2+)/Mn(2+) homeostasis in the absence of P(2)-type ATPases.</title>
        <authorList>
            <person name="Furune T."/>
            <person name="Hashimoto K."/>
            <person name="Ishiguro J."/>
        </authorList>
    </citation>
    <scope>SUBCELLULAR LOCATION</scope>
    <scope>FUNCTION</scope>
</reference>
<protein>
    <recommendedName>
        <fullName>Cation-transporting ATPase 5</fullName>
        <ecNumber>7.2.2.-</ecNumber>
    </recommendedName>
</protein>
<gene>
    <name type="primary">cta5</name>
    <name type="ORF">SPAC29A4.19c</name>
</gene>
<sequence>MDSIELKQLVPENDSEPGTPRQLLFQHYDISNEETIGIKPFKSIPAKVYILRVTEILTLGLLHLILTWLPEFRLKWIEAPCSNEDVEFVAISDPSGTSSIEKVSSICLKNDIQTSSFVLPSGKTRYFEYKKLRFYLEPLNLQWVLMPLETSAYSLVTSTPAYIQNGLDTFTIAKLRQVYGSNSLVSTKKSIVTILLNEVLHPFYLFQAVSVLIWLCDSFVFYSCCIVFISSYSIFLSVKESKESENRIHSIIGAPQPVTVIRNQVKQTVLADDLVIGDLLYFSNLDLKTCPVDGILFSSSCLLDESMVTGESVPARKFPLEDNSLDSWMIASCNIFSPHLIHAGTKFLKIDSTPSTPCLISVVRTGFRSNKGQLIRNLLYPNLRPSQLYLDSMSFLKTMAILSFVSIVFIAIYLNLYNASFGHVVLRSLDVLTILVPPALPATLSVGIANSIARLSRALIYTTSPESIHNAGCLSTFVFDKTGTLTENSVQLSCVYVKSGSNGLLKQVDADSLSLDSTKLNAHAYRVATCSQSLELVGNELVGDPLEVTLFTQFNGTFCATIRASNTPHPPLFSVSNSFDGPSQIFSIYKALEFDPVLRRMSVICSTSTERSLMLFTKGAPESILAISSQQSIPSNVQEVIHTLSSKGFRIIAFASKNLITPLQELIHLSRSTLESNVTFQGLFVLESPLRESSKDVISSLLRSKMEVSICSGDSLFTSVFVAKHCGALDSCNFIYTAELADSGDDCPQIHFEKIDLQTQNFQPIPDGFSLKDVILEKDSSLCMDGKLLQRLLTMLSFNEIKILLSKLRVLARMSPFDKATYVELCQKYGCKVGFCGDGANDCIALKQADVGVSLSDSEACAAASFVSKKKSIKDVFNVLLEGRCSLILSHRCFQYMVLCAIVQFSGVFFLYLKNYNFNDNQFLFMDLLIIFPLSAAMSYFDPAQNLTSNRPNSTLFGKGRVKDLGIQSVLIWLSHGLLTLILHELNWVELPEWQLEKSNTKNVLVTSIFLLSSLQYLGICIGINQSSEFLSPIWKKKTYVCLCTTIGLCNIYLCFANENHIISRCLQITRLPTLYRFIILFMGVISCCLTSILNM</sequence>
<accession>O14022</accession>
<name>CTA5_SCHPO</name>